<comment type="catalytic activity">
    <reaction>
        <text>(2R)-3-phosphoglycerate + ATP = (2R)-3-phospho-glyceroyl phosphate + ADP</text>
        <dbReference type="Rhea" id="RHEA:14801"/>
        <dbReference type="ChEBI" id="CHEBI:30616"/>
        <dbReference type="ChEBI" id="CHEBI:57604"/>
        <dbReference type="ChEBI" id="CHEBI:58272"/>
        <dbReference type="ChEBI" id="CHEBI:456216"/>
        <dbReference type="EC" id="2.7.2.3"/>
    </reaction>
</comment>
<comment type="pathway">
    <text>Carbohydrate degradation; glycolysis; pyruvate from D-glyceraldehyde 3-phosphate: step 2/5.</text>
</comment>
<comment type="subunit">
    <text>Homodimer.</text>
</comment>
<comment type="subcellular location">
    <subcellularLocation>
        <location evidence="2">Cytoplasm</location>
    </subcellularLocation>
</comment>
<comment type="similarity">
    <text evidence="2">Belongs to the phosphoglycerate kinase family.</text>
</comment>
<accession>P20971</accession>
<accession>E3GXC7</accession>
<proteinExistence type="inferred from homology"/>
<keyword id="KW-0067">ATP-binding</keyword>
<keyword id="KW-0963">Cytoplasm</keyword>
<keyword id="KW-0324">Glycolysis</keyword>
<keyword id="KW-0418">Kinase</keyword>
<keyword id="KW-0547">Nucleotide-binding</keyword>
<keyword id="KW-1185">Reference proteome</keyword>
<keyword id="KW-0808">Transferase</keyword>
<evidence type="ECO:0000250" key="1"/>
<evidence type="ECO:0000305" key="2"/>
<gene>
    <name type="primary">pgk</name>
    <name type="ordered locus">Mfer_0156</name>
</gene>
<sequence length="410" mass="45871">MFKFYTMDDFDYSGSRVLVRVDINSPVDPHTGRILDDTRMRLHSKTLKELVDENAKVAILAHQSRPGKRDFTTMEEHSKVLSNILDMPVTYVEDIFGCAARESIRNMENGDIILLENVRFYSEEVLKRDPKVQAETHLVRKLSSVVDYYINDAFAAAHRSQPSLVGFPLKLPSAAGRLMEREVKTLYKIIKNVEKPCVYILGGVKIDDSIMIMKNILKNGSADYILTSGLVANVFLEASGIDIKEKNRKILYRKNYKKFIKMAKKLKDKYGEKILTPVDVAINKNGKRIDVPIDDIPNFPIYDIGMETIKIYAEKIREAKTIFANGPAGVFEEQQFSIGTEDLLNAIASSNAFSVIAGGHLAAAAEKMGISNKINHISSGGGACIAFLSGEELPAIKVLEEARKRSDKYI</sequence>
<feature type="chain" id="PRO_0000146057" description="Phosphoglycerate kinase">
    <location>
        <begin position="1"/>
        <end position="410"/>
    </location>
</feature>
<feature type="binding site" evidence="1">
    <location>
        <begin position="22"/>
        <end position="24"/>
    </location>
    <ligand>
        <name>substrate</name>
    </ligand>
</feature>
<feature type="binding site" evidence="1">
    <location>
        <position position="39"/>
    </location>
    <ligand>
        <name>substrate</name>
    </ligand>
</feature>
<feature type="binding site" evidence="1">
    <location>
        <begin position="62"/>
        <end position="65"/>
    </location>
    <ligand>
        <name>substrate</name>
    </ligand>
</feature>
<feature type="binding site" evidence="1">
    <location>
        <position position="119"/>
    </location>
    <ligand>
        <name>substrate</name>
    </ligand>
</feature>
<feature type="binding site" evidence="1">
    <location>
        <position position="159"/>
    </location>
    <ligand>
        <name>substrate</name>
    </ligand>
</feature>
<feature type="binding site" evidence="1">
    <location>
        <position position="332"/>
    </location>
    <ligand>
        <name>ATP</name>
        <dbReference type="ChEBI" id="CHEBI:30616"/>
    </ligand>
</feature>
<feature type="binding site" evidence="1">
    <location>
        <begin position="358"/>
        <end position="361"/>
    </location>
    <ligand>
        <name>ATP</name>
        <dbReference type="ChEBI" id="CHEBI:30616"/>
    </ligand>
</feature>
<name>PGK_METFV</name>
<protein>
    <recommendedName>
        <fullName>Phosphoglycerate kinase</fullName>
        <ecNumber>2.7.2.3</ecNumber>
    </recommendedName>
</protein>
<organism>
    <name type="scientific">Methanothermus fervidus (strain ATCC 43054 / DSM 2088 / JCM 10308 / V24 S)</name>
    <dbReference type="NCBI Taxonomy" id="523846"/>
    <lineage>
        <taxon>Archaea</taxon>
        <taxon>Methanobacteriati</taxon>
        <taxon>Methanobacteriota</taxon>
        <taxon>Methanomada group</taxon>
        <taxon>Methanobacteria</taxon>
        <taxon>Methanobacteriales</taxon>
        <taxon>Methanothermaceae</taxon>
        <taxon>Methanothermus</taxon>
    </lineage>
</organism>
<dbReference type="EC" id="2.7.2.3"/>
<dbReference type="EMBL" id="M55529">
    <property type="protein sequence ID" value="AAA72936.1"/>
    <property type="molecule type" value="Genomic_DNA"/>
</dbReference>
<dbReference type="EMBL" id="CP002278">
    <property type="protein sequence ID" value="ADP76959.1"/>
    <property type="molecule type" value="Genomic_DNA"/>
</dbReference>
<dbReference type="PIR" id="PN0008">
    <property type="entry name" value="PN0008"/>
</dbReference>
<dbReference type="SMR" id="P20971"/>
<dbReference type="STRING" id="523846.Mfer_0156"/>
<dbReference type="KEGG" id="mfv:Mfer_0156"/>
<dbReference type="HOGENOM" id="CLU_025427_0_2_2"/>
<dbReference type="BRENDA" id="2.7.2.3">
    <property type="organism ID" value="3286"/>
</dbReference>
<dbReference type="SABIO-RK" id="P20971"/>
<dbReference type="UniPathway" id="UPA00109">
    <property type="reaction ID" value="UER00185"/>
</dbReference>
<dbReference type="Proteomes" id="UP000002315">
    <property type="component" value="Chromosome"/>
</dbReference>
<dbReference type="GO" id="GO:0005829">
    <property type="term" value="C:cytosol"/>
    <property type="evidence" value="ECO:0007669"/>
    <property type="project" value="TreeGrafter"/>
</dbReference>
<dbReference type="GO" id="GO:0043531">
    <property type="term" value="F:ADP binding"/>
    <property type="evidence" value="ECO:0007669"/>
    <property type="project" value="TreeGrafter"/>
</dbReference>
<dbReference type="GO" id="GO:0005524">
    <property type="term" value="F:ATP binding"/>
    <property type="evidence" value="ECO:0007669"/>
    <property type="project" value="UniProtKB-KW"/>
</dbReference>
<dbReference type="GO" id="GO:0004618">
    <property type="term" value="F:phosphoglycerate kinase activity"/>
    <property type="evidence" value="ECO:0007669"/>
    <property type="project" value="UniProtKB-UniRule"/>
</dbReference>
<dbReference type="GO" id="GO:0006094">
    <property type="term" value="P:gluconeogenesis"/>
    <property type="evidence" value="ECO:0007669"/>
    <property type="project" value="TreeGrafter"/>
</dbReference>
<dbReference type="GO" id="GO:0006096">
    <property type="term" value="P:glycolytic process"/>
    <property type="evidence" value="ECO:0007669"/>
    <property type="project" value="UniProtKB-UniRule"/>
</dbReference>
<dbReference type="CDD" id="cd00318">
    <property type="entry name" value="Phosphoglycerate_kinase"/>
    <property type="match status" value="1"/>
</dbReference>
<dbReference type="FunFam" id="3.40.50.1260:FF:000006">
    <property type="entry name" value="Phosphoglycerate kinase"/>
    <property type="match status" value="1"/>
</dbReference>
<dbReference type="FunFam" id="3.40.50.1260:FF:000012">
    <property type="entry name" value="Phosphoglycerate kinase"/>
    <property type="match status" value="1"/>
</dbReference>
<dbReference type="Gene3D" id="3.40.50.1260">
    <property type="entry name" value="Phosphoglycerate kinase, N-terminal domain"/>
    <property type="match status" value="2"/>
</dbReference>
<dbReference type="HAMAP" id="MF_00145">
    <property type="entry name" value="Phosphoglyc_kinase"/>
    <property type="match status" value="1"/>
</dbReference>
<dbReference type="InterPro" id="IPR001576">
    <property type="entry name" value="Phosphoglycerate_kinase"/>
</dbReference>
<dbReference type="InterPro" id="IPR015911">
    <property type="entry name" value="Phosphoglycerate_kinase_CS"/>
</dbReference>
<dbReference type="InterPro" id="IPR015824">
    <property type="entry name" value="Phosphoglycerate_kinase_N"/>
</dbReference>
<dbReference type="InterPro" id="IPR036043">
    <property type="entry name" value="Phosphoglycerate_kinase_sf"/>
</dbReference>
<dbReference type="PANTHER" id="PTHR11406">
    <property type="entry name" value="PHOSPHOGLYCERATE KINASE"/>
    <property type="match status" value="1"/>
</dbReference>
<dbReference type="PANTHER" id="PTHR11406:SF23">
    <property type="entry name" value="PHOSPHOGLYCERATE KINASE 1, CHLOROPLASTIC-RELATED"/>
    <property type="match status" value="1"/>
</dbReference>
<dbReference type="Pfam" id="PF00162">
    <property type="entry name" value="PGK"/>
    <property type="match status" value="1"/>
</dbReference>
<dbReference type="PIRSF" id="PIRSF000724">
    <property type="entry name" value="Pgk"/>
    <property type="match status" value="1"/>
</dbReference>
<dbReference type="PRINTS" id="PR00477">
    <property type="entry name" value="PHGLYCKINASE"/>
</dbReference>
<dbReference type="SUPFAM" id="SSF53748">
    <property type="entry name" value="Phosphoglycerate kinase"/>
    <property type="match status" value="1"/>
</dbReference>
<dbReference type="PROSITE" id="PS00111">
    <property type="entry name" value="PGLYCERATE_KINASE"/>
    <property type="match status" value="1"/>
</dbReference>
<reference key="1">
    <citation type="journal article" date="1990" name="Gene">
        <title>Cloning and sequencing the gene encoding 3-phosphoglycerate kinase from mesophilic Methanobacterium bryantii and thermophilic Methanothermus fervidus.</title>
        <authorList>
            <person name="Fabry S."/>
            <person name="Heppner P."/>
            <person name="Dietmaier W."/>
            <person name="Hensel R."/>
        </authorList>
    </citation>
    <scope>NUCLEOTIDE SEQUENCE [GENOMIC DNA]</scope>
    <source>
        <strain>ATCC 43054 / DSM 2088 / JCM 10308 / V24 S</strain>
    </source>
</reference>
<reference key="2">
    <citation type="journal article" date="2010" name="Stand. Genomic Sci.">
        <title>Complete genome sequence of Methanothermus fervidus type strain (V24S).</title>
        <authorList>
            <person name="Anderson I."/>
            <person name="Djao O.D."/>
            <person name="Misra M."/>
            <person name="Chertkov O."/>
            <person name="Nolan M."/>
            <person name="Lucas S."/>
            <person name="Lapidus A."/>
            <person name="Del Rio T.G."/>
            <person name="Tice H."/>
            <person name="Cheng J.F."/>
            <person name="Tapia R."/>
            <person name="Han C."/>
            <person name="Goodwin L."/>
            <person name="Pitluck S."/>
            <person name="Liolios K."/>
            <person name="Ivanova N."/>
            <person name="Mavromatis K."/>
            <person name="Mikhailova N."/>
            <person name="Pati A."/>
            <person name="Brambilla E."/>
            <person name="Chen A."/>
            <person name="Palaniappan K."/>
            <person name="Land M."/>
            <person name="Hauser L."/>
            <person name="Chang Y.J."/>
            <person name="Jeffries C.D."/>
            <person name="Sikorski J."/>
            <person name="Spring S."/>
            <person name="Rohde M."/>
            <person name="Eichinger K."/>
            <person name="Huber H."/>
            <person name="Wirth R."/>
            <person name="Goker M."/>
            <person name="Detter J.C."/>
            <person name="Woyke T."/>
            <person name="Bristow J."/>
            <person name="Eisen J.A."/>
            <person name="Markowitz V."/>
            <person name="Hugenholtz P."/>
            <person name="Klenk H.P."/>
            <person name="Kyrpides N.C."/>
        </authorList>
    </citation>
    <scope>NUCLEOTIDE SEQUENCE [LARGE SCALE GENOMIC DNA]</scope>
    <source>
        <strain>ATCC 43054 / DSM 2088 / JCM 10308 / V24 S</strain>
    </source>
</reference>